<protein>
    <recommendedName>
        <fullName evidence="1">UDP-2,3-diacylglucosamine hydrolase</fullName>
        <ecNumber evidence="1">3.6.1.54</ecNumber>
    </recommendedName>
    <alternativeName>
        <fullName evidence="1">UDP-2,3-diacylglucosamine diphosphatase</fullName>
    </alternativeName>
</protein>
<reference key="1">
    <citation type="journal article" date="2006" name="Proc. Natl. Acad. Sci. U.S.A.">
        <title>Identification of genes subject to positive selection in uropathogenic strains of Escherichia coli: a comparative genomics approach.</title>
        <authorList>
            <person name="Chen S.L."/>
            <person name="Hung C.-S."/>
            <person name="Xu J."/>
            <person name="Reigstad C.S."/>
            <person name="Magrini V."/>
            <person name="Sabo A."/>
            <person name="Blasiar D."/>
            <person name="Bieri T."/>
            <person name="Meyer R.R."/>
            <person name="Ozersky P."/>
            <person name="Armstrong J.R."/>
            <person name="Fulton R.S."/>
            <person name="Latreille J.P."/>
            <person name="Spieth J."/>
            <person name="Hooton T.M."/>
            <person name="Mardis E.R."/>
            <person name="Hultgren S.J."/>
            <person name="Gordon J.I."/>
        </authorList>
    </citation>
    <scope>NUCLEOTIDE SEQUENCE [LARGE SCALE GENOMIC DNA]</scope>
    <source>
        <strain>UTI89 / UPEC</strain>
    </source>
</reference>
<comment type="function">
    <text evidence="1">Hydrolyzes the pyrophosphate bond of UDP-2,3-diacylglucosamine to yield 2,3-diacylglucosamine 1-phosphate (lipid X) and UMP by catalyzing the attack of water at the alpha-P atom. Involved in the biosynthesis of lipid A, a phosphorylated glycolipid that anchors the lipopolysaccharide to the outer membrane of the cell.</text>
</comment>
<comment type="catalytic activity">
    <reaction evidence="1">
        <text>UDP-2-N,3-O-bis[(3R)-3-hydroxytetradecanoyl]-alpha-D-glucosamine + H2O = 2-N,3-O-bis[(3R)-3-hydroxytetradecanoyl]-alpha-D-glucosaminyl 1-phosphate + UMP + 2 H(+)</text>
        <dbReference type="Rhea" id="RHEA:25213"/>
        <dbReference type="ChEBI" id="CHEBI:15377"/>
        <dbReference type="ChEBI" id="CHEBI:15378"/>
        <dbReference type="ChEBI" id="CHEBI:57865"/>
        <dbReference type="ChEBI" id="CHEBI:57957"/>
        <dbReference type="ChEBI" id="CHEBI:78847"/>
        <dbReference type="EC" id="3.6.1.54"/>
    </reaction>
</comment>
<comment type="cofactor">
    <cofactor evidence="1">
        <name>Mn(2+)</name>
        <dbReference type="ChEBI" id="CHEBI:29035"/>
    </cofactor>
    <text evidence="1">Binds 2 Mn(2+) ions per subunit in a binuclear metal center.</text>
</comment>
<comment type="pathway">
    <text evidence="1">Glycolipid biosynthesis; lipid IV(A) biosynthesis; lipid IV(A) from (3R)-3-hydroxytetradecanoyl-[acyl-carrier-protein] and UDP-N-acetyl-alpha-D-glucosamine: step 4/6.</text>
</comment>
<comment type="subcellular location">
    <subcellularLocation>
        <location evidence="1">Cell inner membrane</location>
        <topology evidence="1">Peripheral membrane protein</topology>
        <orientation evidence="1">Cytoplasmic side</orientation>
    </subcellularLocation>
</comment>
<comment type="similarity">
    <text evidence="1">Belongs to the LpxH family.</text>
</comment>
<proteinExistence type="inferred from homology"/>
<evidence type="ECO:0000255" key="1">
    <source>
        <dbReference type="HAMAP-Rule" id="MF_00575"/>
    </source>
</evidence>
<gene>
    <name evidence="1" type="primary">lpxH</name>
    <name type="ordered locus">UTI89_C0553</name>
</gene>
<sequence>MATLFIADLHLCVEEPAITAGFLRFLAGEARKADALYILGDLFEAWIGDDDPNPLHHQMAAAIKAVSDSGVPCYFIHGNRDFLLGKRFARESGMTLLPEEKVLELYGRRVLIMHGDTLCTDDAGYQAFRAKVHKPWLQTLFLALPLFVRKRIAARMRANSKEANSSKSLAIMDVNQNAVVSAMEKHQVQWLIHGHTHRPAVHELIANQQPAFRVVLGAWHTEGSMVKVTADDVELIHFPF</sequence>
<dbReference type="EC" id="3.6.1.54" evidence="1"/>
<dbReference type="EMBL" id="CP000243">
    <property type="protein sequence ID" value="ABE06054.1"/>
    <property type="molecule type" value="Genomic_DNA"/>
</dbReference>
<dbReference type="RefSeq" id="WP_000212244.1">
    <property type="nucleotide sequence ID" value="NZ_CP064825.1"/>
</dbReference>
<dbReference type="SMR" id="Q1RF10"/>
<dbReference type="KEGG" id="eci:UTI89_C0553"/>
<dbReference type="HOGENOM" id="CLU_074586_0_0_6"/>
<dbReference type="UniPathway" id="UPA00359">
    <property type="reaction ID" value="UER00480"/>
</dbReference>
<dbReference type="Proteomes" id="UP000001952">
    <property type="component" value="Chromosome"/>
</dbReference>
<dbReference type="GO" id="GO:0005737">
    <property type="term" value="C:cytoplasm"/>
    <property type="evidence" value="ECO:0007669"/>
    <property type="project" value="InterPro"/>
</dbReference>
<dbReference type="GO" id="GO:0019897">
    <property type="term" value="C:extrinsic component of plasma membrane"/>
    <property type="evidence" value="ECO:0007669"/>
    <property type="project" value="UniProtKB-UniRule"/>
</dbReference>
<dbReference type="GO" id="GO:0030145">
    <property type="term" value="F:manganese ion binding"/>
    <property type="evidence" value="ECO:0007669"/>
    <property type="project" value="UniProtKB-UniRule"/>
</dbReference>
<dbReference type="GO" id="GO:0008758">
    <property type="term" value="F:UDP-2,3-diacylglucosamine hydrolase activity"/>
    <property type="evidence" value="ECO:0007669"/>
    <property type="project" value="UniProtKB-UniRule"/>
</dbReference>
<dbReference type="GO" id="GO:0009245">
    <property type="term" value="P:lipid A biosynthetic process"/>
    <property type="evidence" value="ECO:0007669"/>
    <property type="project" value="UniProtKB-UniRule"/>
</dbReference>
<dbReference type="CDD" id="cd07398">
    <property type="entry name" value="MPP_YbbF-LpxH"/>
    <property type="match status" value="1"/>
</dbReference>
<dbReference type="FunFam" id="3.60.21.10:FF:000012">
    <property type="entry name" value="UDP-2,3-diacylglucosamine hydrolase"/>
    <property type="match status" value="1"/>
</dbReference>
<dbReference type="Gene3D" id="3.60.21.10">
    <property type="match status" value="1"/>
</dbReference>
<dbReference type="HAMAP" id="MF_00575">
    <property type="entry name" value="LpxH"/>
    <property type="match status" value="1"/>
</dbReference>
<dbReference type="InterPro" id="IPR004843">
    <property type="entry name" value="Calcineurin-like_PHP_ApaH"/>
</dbReference>
<dbReference type="InterPro" id="IPR043461">
    <property type="entry name" value="LpxH-like"/>
</dbReference>
<dbReference type="InterPro" id="IPR029052">
    <property type="entry name" value="Metallo-depent_PP-like"/>
</dbReference>
<dbReference type="InterPro" id="IPR010138">
    <property type="entry name" value="UDP-diacylglucosamine_Hdrlase"/>
</dbReference>
<dbReference type="NCBIfam" id="TIGR01854">
    <property type="entry name" value="lipid_A_lpxH"/>
    <property type="match status" value="1"/>
</dbReference>
<dbReference type="NCBIfam" id="NF003743">
    <property type="entry name" value="PRK05340.1"/>
    <property type="match status" value="1"/>
</dbReference>
<dbReference type="PANTHER" id="PTHR34990:SF1">
    <property type="entry name" value="UDP-2,3-DIACYLGLUCOSAMINE HYDROLASE"/>
    <property type="match status" value="1"/>
</dbReference>
<dbReference type="PANTHER" id="PTHR34990">
    <property type="entry name" value="UDP-2,3-DIACYLGLUCOSAMINE HYDROLASE-RELATED"/>
    <property type="match status" value="1"/>
</dbReference>
<dbReference type="Pfam" id="PF00149">
    <property type="entry name" value="Metallophos"/>
    <property type="match status" value="1"/>
</dbReference>
<dbReference type="SUPFAM" id="SSF56300">
    <property type="entry name" value="Metallo-dependent phosphatases"/>
    <property type="match status" value="1"/>
</dbReference>
<organism>
    <name type="scientific">Escherichia coli (strain UTI89 / UPEC)</name>
    <dbReference type="NCBI Taxonomy" id="364106"/>
    <lineage>
        <taxon>Bacteria</taxon>
        <taxon>Pseudomonadati</taxon>
        <taxon>Pseudomonadota</taxon>
        <taxon>Gammaproteobacteria</taxon>
        <taxon>Enterobacterales</taxon>
        <taxon>Enterobacteriaceae</taxon>
        <taxon>Escherichia</taxon>
    </lineage>
</organism>
<name>LPXH_ECOUT</name>
<feature type="chain" id="PRO_1000025052" description="UDP-2,3-diacylglucosamine hydrolase">
    <location>
        <begin position="1"/>
        <end position="240"/>
    </location>
</feature>
<feature type="binding site" evidence="1">
    <location>
        <position position="8"/>
    </location>
    <ligand>
        <name>Mn(2+)</name>
        <dbReference type="ChEBI" id="CHEBI:29035"/>
        <label>1</label>
    </ligand>
</feature>
<feature type="binding site" evidence="1">
    <location>
        <position position="10"/>
    </location>
    <ligand>
        <name>Mn(2+)</name>
        <dbReference type="ChEBI" id="CHEBI:29035"/>
        <label>1</label>
    </ligand>
</feature>
<feature type="binding site" evidence="1">
    <location>
        <position position="41"/>
    </location>
    <ligand>
        <name>Mn(2+)</name>
        <dbReference type="ChEBI" id="CHEBI:29035"/>
        <label>1</label>
    </ligand>
</feature>
<feature type="binding site" evidence="1">
    <location>
        <position position="41"/>
    </location>
    <ligand>
        <name>Mn(2+)</name>
        <dbReference type="ChEBI" id="CHEBI:29035"/>
        <label>2</label>
    </ligand>
</feature>
<feature type="binding site" evidence="1">
    <location>
        <begin position="79"/>
        <end position="80"/>
    </location>
    <ligand>
        <name>substrate</name>
    </ligand>
</feature>
<feature type="binding site" evidence="1">
    <location>
        <position position="79"/>
    </location>
    <ligand>
        <name>Mn(2+)</name>
        <dbReference type="ChEBI" id="CHEBI:29035"/>
        <label>2</label>
    </ligand>
</feature>
<feature type="binding site" evidence="1">
    <location>
        <position position="114"/>
    </location>
    <ligand>
        <name>Mn(2+)</name>
        <dbReference type="ChEBI" id="CHEBI:29035"/>
        <label>2</label>
    </ligand>
</feature>
<feature type="binding site" evidence="1">
    <location>
        <position position="122"/>
    </location>
    <ligand>
        <name>substrate</name>
    </ligand>
</feature>
<feature type="binding site" evidence="1">
    <location>
        <position position="160"/>
    </location>
    <ligand>
        <name>substrate</name>
    </ligand>
</feature>
<feature type="binding site" evidence="1">
    <location>
        <position position="164"/>
    </location>
    <ligand>
        <name>substrate</name>
    </ligand>
</feature>
<feature type="binding site" evidence="1">
    <location>
        <position position="167"/>
    </location>
    <ligand>
        <name>substrate</name>
    </ligand>
</feature>
<feature type="binding site" evidence="1">
    <location>
        <position position="195"/>
    </location>
    <ligand>
        <name>Mn(2+)</name>
        <dbReference type="ChEBI" id="CHEBI:29035"/>
        <label>2</label>
    </ligand>
</feature>
<feature type="binding site" evidence="1">
    <location>
        <position position="195"/>
    </location>
    <ligand>
        <name>substrate</name>
    </ligand>
</feature>
<feature type="binding site" evidence="1">
    <location>
        <position position="197"/>
    </location>
    <ligand>
        <name>Mn(2+)</name>
        <dbReference type="ChEBI" id="CHEBI:29035"/>
        <label>1</label>
    </ligand>
</feature>
<keyword id="KW-0997">Cell inner membrane</keyword>
<keyword id="KW-1003">Cell membrane</keyword>
<keyword id="KW-0378">Hydrolase</keyword>
<keyword id="KW-0441">Lipid A biosynthesis</keyword>
<keyword id="KW-0444">Lipid biosynthesis</keyword>
<keyword id="KW-0443">Lipid metabolism</keyword>
<keyword id="KW-0464">Manganese</keyword>
<keyword id="KW-0472">Membrane</keyword>
<keyword id="KW-0479">Metal-binding</keyword>
<accession>Q1RF10</accession>